<sequence length="172" mass="19034">MDLKQYVSEVKDWPSAGVSFKDITTIMDNGEAYGYATDQIVEYAKEKNIDIVVGPEARGFIIGCPVAYSMGIGFAPVRKEGKLPREVIRYEYNLEYGTNVLTMHKDAIKPGQRVLITDDLLATGGTIEAAIKLVEQLGGIVVGIAFIIELKYLNGIDKIKDYDVMSLISYDE</sequence>
<gene>
    <name evidence="1" type="primary">apt</name>
    <name type="ordered locus">SE_1317</name>
</gene>
<comment type="function">
    <text evidence="1">Catalyzes a salvage reaction resulting in the formation of AMP, that is energically less costly than de novo synthesis.</text>
</comment>
<comment type="catalytic activity">
    <reaction evidence="1">
        <text>AMP + diphosphate = 5-phospho-alpha-D-ribose 1-diphosphate + adenine</text>
        <dbReference type="Rhea" id="RHEA:16609"/>
        <dbReference type="ChEBI" id="CHEBI:16708"/>
        <dbReference type="ChEBI" id="CHEBI:33019"/>
        <dbReference type="ChEBI" id="CHEBI:58017"/>
        <dbReference type="ChEBI" id="CHEBI:456215"/>
        <dbReference type="EC" id="2.4.2.7"/>
    </reaction>
</comment>
<comment type="pathway">
    <text evidence="1">Purine metabolism; AMP biosynthesis via salvage pathway; AMP from adenine: step 1/1.</text>
</comment>
<comment type="subunit">
    <text evidence="1">Homodimer.</text>
</comment>
<comment type="subcellular location">
    <subcellularLocation>
        <location evidence="1">Cytoplasm</location>
    </subcellularLocation>
</comment>
<comment type="similarity">
    <text evidence="1">Belongs to the purine/pyrimidine phosphoribosyltransferase family.</text>
</comment>
<keyword id="KW-0963">Cytoplasm</keyword>
<keyword id="KW-0328">Glycosyltransferase</keyword>
<keyword id="KW-0660">Purine salvage</keyword>
<keyword id="KW-0808">Transferase</keyword>
<proteinExistence type="inferred from homology"/>
<accession>Q8CS95</accession>
<name>APT_STAES</name>
<evidence type="ECO:0000255" key="1">
    <source>
        <dbReference type="HAMAP-Rule" id="MF_00004"/>
    </source>
</evidence>
<reference key="1">
    <citation type="journal article" date="2003" name="Mol. Microbiol.">
        <title>Genome-based analysis of virulence genes in a non-biofilm-forming Staphylococcus epidermidis strain (ATCC 12228).</title>
        <authorList>
            <person name="Zhang Y.-Q."/>
            <person name="Ren S.-X."/>
            <person name="Li H.-L."/>
            <person name="Wang Y.-X."/>
            <person name="Fu G."/>
            <person name="Yang J."/>
            <person name="Qin Z.-Q."/>
            <person name="Miao Y.-G."/>
            <person name="Wang W.-Y."/>
            <person name="Chen R.-S."/>
            <person name="Shen Y."/>
            <person name="Chen Z."/>
            <person name="Yuan Z.-H."/>
            <person name="Zhao G.-P."/>
            <person name="Qu D."/>
            <person name="Danchin A."/>
            <person name="Wen Y.-M."/>
        </authorList>
    </citation>
    <scope>NUCLEOTIDE SEQUENCE [LARGE SCALE GENOMIC DNA]</scope>
    <source>
        <strain>ATCC 12228 / FDA PCI 1200</strain>
    </source>
</reference>
<organism>
    <name type="scientific">Staphylococcus epidermidis (strain ATCC 12228 / FDA PCI 1200)</name>
    <dbReference type="NCBI Taxonomy" id="176280"/>
    <lineage>
        <taxon>Bacteria</taxon>
        <taxon>Bacillati</taxon>
        <taxon>Bacillota</taxon>
        <taxon>Bacilli</taxon>
        <taxon>Bacillales</taxon>
        <taxon>Staphylococcaceae</taxon>
        <taxon>Staphylococcus</taxon>
    </lineage>
</organism>
<protein>
    <recommendedName>
        <fullName evidence="1">Adenine phosphoribosyltransferase</fullName>
        <shortName evidence="1">APRT</shortName>
        <ecNumber evidence="1">2.4.2.7</ecNumber>
    </recommendedName>
</protein>
<dbReference type="EC" id="2.4.2.7" evidence="1"/>
<dbReference type="EMBL" id="AE015929">
    <property type="protein sequence ID" value="AAO04916.1"/>
    <property type="molecule type" value="Genomic_DNA"/>
</dbReference>
<dbReference type="RefSeq" id="NP_764872.1">
    <property type="nucleotide sequence ID" value="NC_004461.1"/>
</dbReference>
<dbReference type="RefSeq" id="WP_001832698.1">
    <property type="nucleotide sequence ID" value="NZ_WBME01000059.1"/>
</dbReference>
<dbReference type="SMR" id="Q8CS95"/>
<dbReference type="KEGG" id="sep:SE_1317"/>
<dbReference type="PATRIC" id="fig|176280.10.peg.1285"/>
<dbReference type="eggNOG" id="COG0503">
    <property type="taxonomic scope" value="Bacteria"/>
</dbReference>
<dbReference type="HOGENOM" id="CLU_063339_3_0_9"/>
<dbReference type="OrthoDB" id="9803963at2"/>
<dbReference type="UniPathway" id="UPA00588">
    <property type="reaction ID" value="UER00646"/>
</dbReference>
<dbReference type="Proteomes" id="UP000001411">
    <property type="component" value="Chromosome"/>
</dbReference>
<dbReference type="GO" id="GO:0005737">
    <property type="term" value="C:cytoplasm"/>
    <property type="evidence" value="ECO:0007669"/>
    <property type="project" value="UniProtKB-SubCell"/>
</dbReference>
<dbReference type="GO" id="GO:0002055">
    <property type="term" value="F:adenine binding"/>
    <property type="evidence" value="ECO:0007669"/>
    <property type="project" value="TreeGrafter"/>
</dbReference>
<dbReference type="GO" id="GO:0003999">
    <property type="term" value="F:adenine phosphoribosyltransferase activity"/>
    <property type="evidence" value="ECO:0007669"/>
    <property type="project" value="UniProtKB-UniRule"/>
</dbReference>
<dbReference type="GO" id="GO:0016208">
    <property type="term" value="F:AMP binding"/>
    <property type="evidence" value="ECO:0007669"/>
    <property type="project" value="TreeGrafter"/>
</dbReference>
<dbReference type="GO" id="GO:0006168">
    <property type="term" value="P:adenine salvage"/>
    <property type="evidence" value="ECO:0007669"/>
    <property type="project" value="InterPro"/>
</dbReference>
<dbReference type="GO" id="GO:0044209">
    <property type="term" value="P:AMP salvage"/>
    <property type="evidence" value="ECO:0007669"/>
    <property type="project" value="UniProtKB-UniRule"/>
</dbReference>
<dbReference type="GO" id="GO:0006166">
    <property type="term" value="P:purine ribonucleoside salvage"/>
    <property type="evidence" value="ECO:0007669"/>
    <property type="project" value="UniProtKB-KW"/>
</dbReference>
<dbReference type="CDD" id="cd06223">
    <property type="entry name" value="PRTases_typeI"/>
    <property type="match status" value="1"/>
</dbReference>
<dbReference type="FunFam" id="3.40.50.2020:FF:000004">
    <property type="entry name" value="Adenine phosphoribosyltransferase"/>
    <property type="match status" value="1"/>
</dbReference>
<dbReference type="Gene3D" id="3.40.50.2020">
    <property type="match status" value="1"/>
</dbReference>
<dbReference type="HAMAP" id="MF_00004">
    <property type="entry name" value="Aden_phosphoribosyltr"/>
    <property type="match status" value="1"/>
</dbReference>
<dbReference type="InterPro" id="IPR005764">
    <property type="entry name" value="Ade_phspho_trans"/>
</dbReference>
<dbReference type="InterPro" id="IPR000836">
    <property type="entry name" value="PRibTrfase_dom"/>
</dbReference>
<dbReference type="InterPro" id="IPR029057">
    <property type="entry name" value="PRTase-like"/>
</dbReference>
<dbReference type="InterPro" id="IPR050054">
    <property type="entry name" value="UPRTase/APRTase"/>
</dbReference>
<dbReference type="NCBIfam" id="TIGR01090">
    <property type="entry name" value="apt"/>
    <property type="match status" value="1"/>
</dbReference>
<dbReference type="NCBIfam" id="NF002633">
    <property type="entry name" value="PRK02304.1-2"/>
    <property type="match status" value="1"/>
</dbReference>
<dbReference type="NCBIfam" id="NF002634">
    <property type="entry name" value="PRK02304.1-3"/>
    <property type="match status" value="1"/>
</dbReference>
<dbReference type="NCBIfam" id="NF002636">
    <property type="entry name" value="PRK02304.1-5"/>
    <property type="match status" value="1"/>
</dbReference>
<dbReference type="PANTHER" id="PTHR32315">
    <property type="entry name" value="ADENINE PHOSPHORIBOSYLTRANSFERASE"/>
    <property type="match status" value="1"/>
</dbReference>
<dbReference type="PANTHER" id="PTHR32315:SF3">
    <property type="entry name" value="ADENINE PHOSPHORIBOSYLTRANSFERASE"/>
    <property type="match status" value="1"/>
</dbReference>
<dbReference type="Pfam" id="PF00156">
    <property type="entry name" value="Pribosyltran"/>
    <property type="match status" value="1"/>
</dbReference>
<dbReference type="SUPFAM" id="SSF53271">
    <property type="entry name" value="PRTase-like"/>
    <property type="match status" value="1"/>
</dbReference>
<feature type="chain" id="PRO_0000149456" description="Adenine phosphoribosyltransferase">
    <location>
        <begin position="1"/>
        <end position="172"/>
    </location>
</feature>